<reference key="1">
    <citation type="journal article" date="2003" name="Nature">
        <title>Genome sequence of Bacillus cereus and comparative analysis with Bacillus anthracis.</title>
        <authorList>
            <person name="Ivanova N."/>
            <person name="Sorokin A."/>
            <person name="Anderson I."/>
            <person name="Galleron N."/>
            <person name="Candelon B."/>
            <person name="Kapatral V."/>
            <person name="Bhattacharyya A."/>
            <person name="Reznik G."/>
            <person name="Mikhailova N."/>
            <person name="Lapidus A."/>
            <person name="Chu L."/>
            <person name="Mazur M."/>
            <person name="Goltsman E."/>
            <person name="Larsen N."/>
            <person name="D'Souza M."/>
            <person name="Walunas T."/>
            <person name="Grechkin Y."/>
            <person name="Pusch G."/>
            <person name="Haselkorn R."/>
            <person name="Fonstein M."/>
            <person name="Ehrlich S.D."/>
            <person name="Overbeek R."/>
            <person name="Kyrpides N.C."/>
        </authorList>
    </citation>
    <scope>NUCLEOTIDE SEQUENCE [LARGE SCALE GENOMIC DNA]</scope>
    <source>
        <strain>ATCC 14579 / DSM 31 / CCUG 7414 / JCM 2152 / NBRC 15305 / NCIMB 9373 / NCTC 2599 / NRRL B-3711</strain>
    </source>
</reference>
<organism>
    <name type="scientific">Bacillus cereus (strain ATCC 14579 / DSM 31 / CCUG 7414 / JCM 2152 / NBRC 15305 / NCIMB 9373 / NCTC 2599 / NRRL B-3711)</name>
    <dbReference type="NCBI Taxonomy" id="226900"/>
    <lineage>
        <taxon>Bacteria</taxon>
        <taxon>Bacillati</taxon>
        <taxon>Bacillota</taxon>
        <taxon>Bacilli</taxon>
        <taxon>Bacillales</taxon>
        <taxon>Bacillaceae</taxon>
        <taxon>Bacillus</taxon>
        <taxon>Bacillus cereus group</taxon>
    </lineage>
</organism>
<comment type="function">
    <text evidence="1">Formation of pseudouridine at positions 38, 39 and 40 in the anticodon stem and loop of transfer RNAs.</text>
</comment>
<comment type="catalytic activity">
    <reaction evidence="1">
        <text>uridine(38/39/40) in tRNA = pseudouridine(38/39/40) in tRNA</text>
        <dbReference type="Rhea" id="RHEA:22376"/>
        <dbReference type="Rhea" id="RHEA-COMP:10085"/>
        <dbReference type="Rhea" id="RHEA-COMP:10087"/>
        <dbReference type="ChEBI" id="CHEBI:65314"/>
        <dbReference type="ChEBI" id="CHEBI:65315"/>
        <dbReference type="EC" id="5.4.99.12"/>
    </reaction>
</comment>
<comment type="subunit">
    <text evidence="1">Homodimer.</text>
</comment>
<comment type="similarity">
    <text evidence="1">Belongs to the tRNA pseudouridine synthase TruA family.</text>
</comment>
<comment type="sequence caution" evidence="2">
    <conflict type="erroneous initiation">
        <sequence resource="EMBL-CDS" id="AAP07243"/>
    </conflict>
</comment>
<gene>
    <name evidence="1" type="primary">truA1</name>
    <name type="ordered locus">BC_0163</name>
</gene>
<accession>Q814C2</accession>
<protein>
    <recommendedName>
        <fullName evidence="1">tRNA pseudouridine synthase A 1</fullName>
        <ecNumber evidence="1">5.4.99.12</ecNumber>
    </recommendedName>
    <alternativeName>
        <fullName evidence="1">tRNA pseudouridine(38-40) synthase</fullName>
    </alternativeName>
    <alternativeName>
        <fullName evidence="1">tRNA pseudouridylate synthase I 1</fullName>
    </alternativeName>
    <alternativeName>
        <fullName evidence="1">tRNA-uridine isomerase I 1</fullName>
    </alternativeName>
</protein>
<dbReference type="EC" id="5.4.99.12" evidence="1"/>
<dbReference type="EMBL" id="AE016877">
    <property type="protein sequence ID" value="AAP07243.1"/>
    <property type="status" value="ALT_INIT"/>
    <property type="molecule type" value="Genomic_DNA"/>
</dbReference>
<dbReference type="RefSeq" id="NP_830042.1">
    <property type="nucleotide sequence ID" value="NC_004722.1"/>
</dbReference>
<dbReference type="SMR" id="Q814C2"/>
<dbReference type="STRING" id="226900.BC_0163"/>
<dbReference type="KEGG" id="bce:BC0163"/>
<dbReference type="PATRIC" id="fig|226900.8.peg.165"/>
<dbReference type="HOGENOM" id="CLU_014673_0_1_9"/>
<dbReference type="OrthoDB" id="9811823at2"/>
<dbReference type="Proteomes" id="UP000001417">
    <property type="component" value="Chromosome"/>
</dbReference>
<dbReference type="GO" id="GO:0009982">
    <property type="term" value="F:pseudouridine synthase activity"/>
    <property type="evidence" value="ECO:0000318"/>
    <property type="project" value="GO_Central"/>
</dbReference>
<dbReference type="GO" id="GO:0003723">
    <property type="term" value="F:RNA binding"/>
    <property type="evidence" value="ECO:0007669"/>
    <property type="project" value="InterPro"/>
</dbReference>
<dbReference type="GO" id="GO:0160147">
    <property type="term" value="F:tRNA pseudouridine(38-40) synthase activity"/>
    <property type="evidence" value="ECO:0007669"/>
    <property type="project" value="UniProtKB-EC"/>
</dbReference>
<dbReference type="GO" id="GO:0031119">
    <property type="term" value="P:tRNA pseudouridine synthesis"/>
    <property type="evidence" value="ECO:0000318"/>
    <property type="project" value="GO_Central"/>
</dbReference>
<dbReference type="CDD" id="cd02570">
    <property type="entry name" value="PseudoU_synth_EcTruA"/>
    <property type="match status" value="1"/>
</dbReference>
<dbReference type="FunFam" id="3.30.70.580:FF:000001">
    <property type="entry name" value="tRNA pseudouridine synthase A"/>
    <property type="match status" value="1"/>
</dbReference>
<dbReference type="FunFam" id="3.30.70.660:FF:000004">
    <property type="entry name" value="tRNA pseudouridine synthase A"/>
    <property type="match status" value="1"/>
</dbReference>
<dbReference type="Gene3D" id="3.30.70.660">
    <property type="entry name" value="Pseudouridine synthase I, catalytic domain, C-terminal subdomain"/>
    <property type="match status" value="1"/>
</dbReference>
<dbReference type="Gene3D" id="3.30.70.580">
    <property type="entry name" value="Pseudouridine synthase I, catalytic domain, N-terminal subdomain"/>
    <property type="match status" value="1"/>
</dbReference>
<dbReference type="HAMAP" id="MF_00171">
    <property type="entry name" value="TruA"/>
    <property type="match status" value="1"/>
</dbReference>
<dbReference type="InterPro" id="IPR020103">
    <property type="entry name" value="PsdUridine_synth_cat_dom_sf"/>
</dbReference>
<dbReference type="InterPro" id="IPR001406">
    <property type="entry name" value="PsdUridine_synth_TruA"/>
</dbReference>
<dbReference type="InterPro" id="IPR020097">
    <property type="entry name" value="PsdUridine_synth_TruA_a/b_dom"/>
</dbReference>
<dbReference type="InterPro" id="IPR020095">
    <property type="entry name" value="PsdUridine_synth_TruA_C"/>
</dbReference>
<dbReference type="InterPro" id="IPR020094">
    <property type="entry name" value="TruA/RsuA/RluB/E/F_N"/>
</dbReference>
<dbReference type="NCBIfam" id="TIGR00071">
    <property type="entry name" value="hisT_truA"/>
    <property type="match status" value="1"/>
</dbReference>
<dbReference type="PANTHER" id="PTHR11142">
    <property type="entry name" value="PSEUDOURIDYLATE SYNTHASE"/>
    <property type="match status" value="1"/>
</dbReference>
<dbReference type="PANTHER" id="PTHR11142:SF0">
    <property type="entry name" value="TRNA PSEUDOURIDINE SYNTHASE-LIKE 1"/>
    <property type="match status" value="1"/>
</dbReference>
<dbReference type="Pfam" id="PF01416">
    <property type="entry name" value="PseudoU_synth_1"/>
    <property type="match status" value="2"/>
</dbReference>
<dbReference type="PIRSF" id="PIRSF001430">
    <property type="entry name" value="tRNA_psdUrid_synth"/>
    <property type="match status" value="1"/>
</dbReference>
<dbReference type="SUPFAM" id="SSF55120">
    <property type="entry name" value="Pseudouridine synthase"/>
    <property type="match status" value="1"/>
</dbReference>
<proteinExistence type="inferred from homology"/>
<name>TRUA1_BACCR</name>
<sequence>MDRIKCTVAYDGMHFCGYQIQPNHRTVQQEIEKALQKLHKGELVRVQASGRTDSTVHAKGQVIHFDTPLSLEEWQWSNALNTMLPDDIVIRQVEKKTEEFHARYGVEKKEYRYRVLLSKTADVFRRNYVYQYPYPLEINSIRKAIPYFIGTHDFTSFCSAKTDKKDKVRTIYEIELIEQDDEIIFRFVGNGFLYNMVRIIVGTLLSVGQGKLDPDSIPEILAKQNRQFAGKMAPGHGLYLWEVNYNN</sequence>
<evidence type="ECO:0000255" key="1">
    <source>
        <dbReference type="HAMAP-Rule" id="MF_00171"/>
    </source>
</evidence>
<evidence type="ECO:0000305" key="2"/>
<keyword id="KW-0413">Isomerase</keyword>
<keyword id="KW-1185">Reference proteome</keyword>
<keyword id="KW-0819">tRNA processing</keyword>
<feature type="chain" id="PRO_0000057323" description="tRNA pseudouridine synthase A 1">
    <location>
        <begin position="1"/>
        <end position="247"/>
    </location>
</feature>
<feature type="active site" description="Nucleophile" evidence="1">
    <location>
        <position position="53"/>
    </location>
</feature>
<feature type="binding site" evidence="1">
    <location>
        <position position="111"/>
    </location>
    <ligand>
        <name>substrate</name>
    </ligand>
</feature>